<reference key="1">
    <citation type="journal article" date="2001" name="Science">
        <title>Comparative genomics of Listeria species.</title>
        <authorList>
            <person name="Glaser P."/>
            <person name="Frangeul L."/>
            <person name="Buchrieser C."/>
            <person name="Rusniok C."/>
            <person name="Amend A."/>
            <person name="Baquero F."/>
            <person name="Berche P."/>
            <person name="Bloecker H."/>
            <person name="Brandt P."/>
            <person name="Chakraborty T."/>
            <person name="Charbit A."/>
            <person name="Chetouani F."/>
            <person name="Couve E."/>
            <person name="de Daruvar A."/>
            <person name="Dehoux P."/>
            <person name="Domann E."/>
            <person name="Dominguez-Bernal G."/>
            <person name="Duchaud E."/>
            <person name="Durant L."/>
            <person name="Dussurget O."/>
            <person name="Entian K.-D."/>
            <person name="Fsihi H."/>
            <person name="Garcia-del Portillo F."/>
            <person name="Garrido P."/>
            <person name="Gautier L."/>
            <person name="Goebel W."/>
            <person name="Gomez-Lopez N."/>
            <person name="Hain T."/>
            <person name="Hauf J."/>
            <person name="Jackson D."/>
            <person name="Jones L.-M."/>
            <person name="Kaerst U."/>
            <person name="Kreft J."/>
            <person name="Kuhn M."/>
            <person name="Kunst F."/>
            <person name="Kurapkat G."/>
            <person name="Madueno E."/>
            <person name="Maitournam A."/>
            <person name="Mata Vicente J."/>
            <person name="Ng E."/>
            <person name="Nedjari H."/>
            <person name="Nordsiek G."/>
            <person name="Novella S."/>
            <person name="de Pablos B."/>
            <person name="Perez-Diaz J.-C."/>
            <person name="Purcell R."/>
            <person name="Remmel B."/>
            <person name="Rose M."/>
            <person name="Schlueter T."/>
            <person name="Simoes N."/>
            <person name="Tierrez A."/>
            <person name="Vazquez-Boland J.-A."/>
            <person name="Voss H."/>
            <person name="Wehland J."/>
            <person name="Cossart P."/>
        </authorList>
    </citation>
    <scope>NUCLEOTIDE SEQUENCE [LARGE SCALE GENOMIC DNA]</scope>
    <source>
        <strain>ATCC BAA-680 / CLIP 11262</strain>
    </source>
</reference>
<proteinExistence type="inferred from homology"/>
<keyword id="KW-0067">ATP-binding</keyword>
<keyword id="KW-0133">Cell shape</keyword>
<keyword id="KW-0961">Cell wall biogenesis/degradation</keyword>
<keyword id="KW-0963">Cytoplasm</keyword>
<keyword id="KW-0436">Ligase</keyword>
<keyword id="KW-0460">Magnesium</keyword>
<keyword id="KW-0464">Manganese</keyword>
<keyword id="KW-0479">Metal-binding</keyword>
<keyword id="KW-0547">Nucleotide-binding</keyword>
<keyword id="KW-0573">Peptidoglycan synthesis</keyword>
<sequence length="370" mass="40783">MKTKLILLYGGKSAEHEVSLQTAFSVINALDLEKFEAEPIYITNEGEWVQGPLLSGKLDFVEQLRFSATDRVKLATAESEKSEGEAISPAVLEADGQETVVFPLLHGPNGEDGTVQGLFEVLNIPYVGNGVLASSAAMDKIVMKKIFADAGIPQVPAVAVRLIDWKNYQEEMVTEMEEVLTYPVFVKPANLGSSVGISKATNKTELIEAMTEAFLYDRRVVVEQGVVAREIEMGVLGNDTPVCSVPGEILPEGAVAKFYDYKAKYQDNNTALIIPTEVEPEILEQMKEYAVQAFLGLDASGLVRADFFLTEDNQLFLNEVNTMPGFTPYSMYPLLWQETGLPYGALIERLVDLAKERHAAKNALKYKLED</sequence>
<dbReference type="EC" id="6.3.2.4" evidence="2"/>
<dbReference type="EMBL" id="AL596166">
    <property type="protein sequence ID" value="CAC96080.1"/>
    <property type="molecule type" value="Genomic_DNA"/>
</dbReference>
<dbReference type="PIR" id="AH1538">
    <property type="entry name" value="AH1538"/>
</dbReference>
<dbReference type="RefSeq" id="WP_003771067.1">
    <property type="nucleotide sequence ID" value="NC_003212.1"/>
</dbReference>
<dbReference type="SMR" id="Q92DG5"/>
<dbReference type="STRING" id="272626.gene:17565175"/>
<dbReference type="GeneID" id="93234291"/>
<dbReference type="KEGG" id="lin:ddlA"/>
<dbReference type="eggNOG" id="COG1181">
    <property type="taxonomic scope" value="Bacteria"/>
</dbReference>
<dbReference type="HOGENOM" id="CLU_039268_0_0_9"/>
<dbReference type="OrthoDB" id="9813261at2"/>
<dbReference type="UniPathway" id="UPA00219"/>
<dbReference type="Proteomes" id="UP000002513">
    <property type="component" value="Chromosome"/>
</dbReference>
<dbReference type="GO" id="GO:0005829">
    <property type="term" value="C:cytosol"/>
    <property type="evidence" value="ECO:0007669"/>
    <property type="project" value="TreeGrafter"/>
</dbReference>
<dbReference type="GO" id="GO:0005524">
    <property type="term" value="F:ATP binding"/>
    <property type="evidence" value="ECO:0007669"/>
    <property type="project" value="UniProtKB-KW"/>
</dbReference>
<dbReference type="GO" id="GO:0008716">
    <property type="term" value="F:D-alanine-D-alanine ligase activity"/>
    <property type="evidence" value="ECO:0007669"/>
    <property type="project" value="UniProtKB-UniRule"/>
</dbReference>
<dbReference type="GO" id="GO:0046872">
    <property type="term" value="F:metal ion binding"/>
    <property type="evidence" value="ECO:0007669"/>
    <property type="project" value="UniProtKB-KW"/>
</dbReference>
<dbReference type="GO" id="GO:0071555">
    <property type="term" value="P:cell wall organization"/>
    <property type="evidence" value="ECO:0007669"/>
    <property type="project" value="UniProtKB-KW"/>
</dbReference>
<dbReference type="GO" id="GO:0009252">
    <property type="term" value="P:peptidoglycan biosynthetic process"/>
    <property type="evidence" value="ECO:0007669"/>
    <property type="project" value="UniProtKB-UniRule"/>
</dbReference>
<dbReference type="GO" id="GO:0008360">
    <property type="term" value="P:regulation of cell shape"/>
    <property type="evidence" value="ECO:0007669"/>
    <property type="project" value="UniProtKB-KW"/>
</dbReference>
<dbReference type="FunFam" id="3.30.1490.20:FF:000007">
    <property type="entry name" value="D-alanine--D-alanine ligase"/>
    <property type="match status" value="1"/>
</dbReference>
<dbReference type="FunFam" id="3.30.470.20:FF:000008">
    <property type="entry name" value="D-alanine--D-alanine ligase"/>
    <property type="match status" value="1"/>
</dbReference>
<dbReference type="Gene3D" id="3.40.50.20">
    <property type="match status" value="1"/>
</dbReference>
<dbReference type="Gene3D" id="3.30.1490.20">
    <property type="entry name" value="ATP-grasp fold, A domain"/>
    <property type="match status" value="1"/>
</dbReference>
<dbReference type="Gene3D" id="3.30.470.20">
    <property type="entry name" value="ATP-grasp fold, B domain"/>
    <property type="match status" value="1"/>
</dbReference>
<dbReference type="HAMAP" id="MF_00047">
    <property type="entry name" value="Dala_Dala_lig"/>
    <property type="match status" value="1"/>
</dbReference>
<dbReference type="InterPro" id="IPR011761">
    <property type="entry name" value="ATP-grasp"/>
</dbReference>
<dbReference type="InterPro" id="IPR013815">
    <property type="entry name" value="ATP_grasp_subdomain_1"/>
</dbReference>
<dbReference type="InterPro" id="IPR000291">
    <property type="entry name" value="D-Ala_lig_Van_CS"/>
</dbReference>
<dbReference type="InterPro" id="IPR005905">
    <property type="entry name" value="D_ala_D_ala"/>
</dbReference>
<dbReference type="InterPro" id="IPR011095">
    <property type="entry name" value="Dala_Dala_lig_C"/>
</dbReference>
<dbReference type="InterPro" id="IPR011127">
    <property type="entry name" value="Dala_Dala_lig_N"/>
</dbReference>
<dbReference type="InterPro" id="IPR016185">
    <property type="entry name" value="PreATP-grasp_dom_sf"/>
</dbReference>
<dbReference type="NCBIfam" id="TIGR01205">
    <property type="entry name" value="D_ala_D_alaTIGR"/>
    <property type="match status" value="1"/>
</dbReference>
<dbReference type="NCBIfam" id="NF002526">
    <property type="entry name" value="PRK01966.1-2"/>
    <property type="match status" value="1"/>
</dbReference>
<dbReference type="NCBIfam" id="NF002528">
    <property type="entry name" value="PRK01966.1-4"/>
    <property type="match status" value="1"/>
</dbReference>
<dbReference type="PANTHER" id="PTHR23132">
    <property type="entry name" value="D-ALANINE--D-ALANINE LIGASE"/>
    <property type="match status" value="1"/>
</dbReference>
<dbReference type="PANTHER" id="PTHR23132:SF25">
    <property type="entry name" value="D-ALANINE--D-ALANINE LIGASE A"/>
    <property type="match status" value="1"/>
</dbReference>
<dbReference type="Pfam" id="PF07478">
    <property type="entry name" value="Dala_Dala_lig_C"/>
    <property type="match status" value="1"/>
</dbReference>
<dbReference type="Pfam" id="PF01820">
    <property type="entry name" value="Dala_Dala_lig_N"/>
    <property type="match status" value="1"/>
</dbReference>
<dbReference type="PIRSF" id="PIRSF039102">
    <property type="entry name" value="Ddl/VanB"/>
    <property type="match status" value="1"/>
</dbReference>
<dbReference type="SUPFAM" id="SSF56059">
    <property type="entry name" value="Glutathione synthetase ATP-binding domain-like"/>
    <property type="match status" value="1"/>
</dbReference>
<dbReference type="SUPFAM" id="SSF52440">
    <property type="entry name" value="PreATP-grasp domain"/>
    <property type="match status" value="1"/>
</dbReference>
<dbReference type="PROSITE" id="PS50975">
    <property type="entry name" value="ATP_GRASP"/>
    <property type="match status" value="1"/>
</dbReference>
<dbReference type="PROSITE" id="PS00843">
    <property type="entry name" value="DALA_DALA_LIGASE_1"/>
    <property type="match status" value="1"/>
</dbReference>
<dbReference type="PROSITE" id="PS00844">
    <property type="entry name" value="DALA_DALA_LIGASE_2"/>
    <property type="match status" value="1"/>
</dbReference>
<evidence type="ECO:0000250" key="1"/>
<evidence type="ECO:0000255" key="2">
    <source>
        <dbReference type="HAMAP-Rule" id="MF_00047"/>
    </source>
</evidence>
<feature type="chain" id="PRO_0000177837" description="D-alanine--D-alanine ligase">
    <location>
        <begin position="1"/>
        <end position="370"/>
    </location>
</feature>
<feature type="domain" description="ATP-grasp" evidence="2">
    <location>
        <begin position="144"/>
        <end position="352"/>
    </location>
</feature>
<feature type="binding site" evidence="2">
    <location>
        <begin position="177"/>
        <end position="232"/>
    </location>
    <ligand>
        <name>ATP</name>
        <dbReference type="ChEBI" id="CHEBI:30616"/>
    </ligand>
</feature>
<feature type="binding site" evidence="2">
    <location>
        <position position="306"/>
    </location>
    <ligand>
        <name>Mg(2+)</name>
        <dbReference type="ChEBI" id="CHEBI:18420"/>
        <label>1</label>
    </ligand>
</feature>
<feature type="binding site" evidence="2">
    <location>
        <position position="319"/>
    </location>
    <ligand>
        <name>Mg(2+)</name>
        <dbReference type="ChEBI" id="CHEBI:18420"/>
        <label>1</label>
    </ligand>
</feature>
<feature type="binding site" evidence="2">
    <location>
        <position position="319"/>
    </location>
    <ligand>
        <name>Mg(2+)</name>
        <dbReference type="ChEBI" id="CHEBI:18420"/>
        <label>2</label>
    </ligand>
</feature>
<feature type="binding site" evidence="2">
    <location>
        <position position="321"/>
    </location>
    <ligand>
        <name>Mg(2+)</name>
        <dbReference type="ChEBI" id="CHEBI:18420"/>
        <label>2</label>
    </ligand>
</feature>
<protein>
    <recommendedName>
        <fullName evidence="2">D-alanine--D-alanine ligase</fullName>
        <ecNumber evidence="2">6.3.2.4</ecNumber>
    </recommendedName>
    <alternativeName>
        <fullName evidence="2">D-Ala-D-Ala ligase</fullName>
    </alternativeName>
    <alternativeName>
        <fullName evidence="2">D-alanylalanine synthetase</fullName>
    </alternativeName>
</protein>
<name>DDL_LISIN</name>
<gene>
    <name evidence="2" type="primary">ddl</name>
    <name type="synonym">ddlA</name>
    <name type="ordered locus">lin0848</name>
</gene>
<organism>
    <name type="scientific">Listeria innocua serovar 6a (strain ATCC BAA-680 / CLIP 11262)</name>
    <dbReference type="NCBI Taxonomy" id="272626"/>
    <lineage>
        <taxon>Bacteria</taxon>
        <taxon>Bacillati</taxon>
        <taxon>Bacillota</taxon>
        <taxon>Bacilli</taxon>
        <taxon>Bacillales</taxon>
        <taxon>Listeriaceae</taxon>
        <taxon>Listeria</taxon>
    </lineage>
</organism>
<accession>Q92DG5</accession>
<comment type="function">
    <text evidence="2">Cell wall formation.</text>
</comment>
<comment type="catalytic activity">
    <reaction evidence="2">
        <text>2 D-alanine + ATP = D-alanyl-D-alanine + ADP + phosphate + H(+)</text>
        <dbReference type="Rhea" id="RHEA:11224"/>
        <dbReference type="ChEBI" id="CHEBI:15378"/>
        <dbReference type="ChEBI" id="CHEBI:30616"/>
        <dbReference type="ChEBI" id="CHEBI:43474"/>
        <dbReference type="ChEBI" id="CHEBI:57416"/>
        <dbReference type="ChEBI" id="CHEBI:57822"/>
        <dbReference type="ChEBI" id="CHEBI:456216"/>
        <dbReference type="EC" id="6.3.2.4"/>
    </reaction>
</comment>
<comment type="cofactor">
    <cofactor evidence="1">
        <name>Mg(2+)</name>
        <dbReference type="ChEBI" id="CHEBI:18420"/>
    </cofactor>
    <cofactor evidence="1">
        <name>Mn(2+)</name>
        <dbReference type="ChEBI" id="CHEBI:29035"/>
    </cofactor>
    <text evidence="1">Binds 2 magnesium or manganese ions per subunit.</text>
</comment>
<comment type="pathway">
    <text evidence="2">Cell wall biogenesis; peptidoglycan biosynthesis.</text>
</comment>
<comment type="subcellular location">
    <subcellularLocation>
        <location evidence="2">Cytoplasm</location>
    </subcellularLocation>
</comment>
<comment type="similarity">
    <text evidence="2">Belongs to the D-alanine--D-alanine ligase family.</text>
</comment>